<evidence type="ECO:0000255" key="1">
    <source>
        <dbReference type="HAMAP-Rule" id="MF_01684"/>
    </source>
</evidence>
<comment type="function">
    <text evidence="1">Catalyzes the irreversible cleavage of the glycosidic bond in both 5'-methylthioadenosine (MTA) and S-adenosylhomocysteine (SAH/AdoHcy) to adenine and the corresponding thioribose, 5'-methylthioribose and S-ribosylhomocysteine, respectively. Also cleaves 5'-deoxyadenosine, a toxic by-product of radical S-adenosylmethionine (SAM) enzymes, into 5-deoxyribose and adenine.</text>
</comment>
<comment type="catalytic activity">
    <reaction evidence="1">
        <text>S-adenosyl-L-homocysteine + H2O = S-(5-deoxy-D-ribos-5-yl)-L-homocysteine + adenine</text>
        <dbReference type="Rhea" id="RHEA:17805"/>
        <dbReference type="ChEBI" id="CHEBI:15377"/>
        <dbReference type="ChEBI" id="CHEBI:16708"/>
        <dbReference type="ChEBI" id="CHEBI:57856"/>
        <dbReference type="ChEBI" id="CHEBI:58195"/>
        <dbReference type="EC" id="3.2.2.9"/>
    </reaction>
</comment>
<comment type="catalytic activity">
    <reaction evidence="1">
        <text>S-methyl-5'-thioadenosine + H2O = 5-(methylsulfanyl)-D-ribose + adenine</text>
        <dbReference type="Rhea" id="RHEA:13617"/>
        <dbReference type="ChEBI" id="CHEBI:15377"/>
        <dbReference type="ChEBI" id="CHEBI:16708"/>
        <dbReference type="ChEBI" id="CHEBI:17509"/>
        <dbReference type="ChEBI" id="CHEBI:78440"/>
        <dbReference type="EC" id="3.2.2.9"/>
    </reaction>
</comment>
<comment type="catalytic activity">
    <reaction evidence="1">
        <text>5'-deoxyadenosine + H2O = 5-deoxy-D-ribose + adenine</text>
        <dbReference type="Rhea" id="RHEA:29859"/>
        <dbReference type="ChEBI" id="CHEBI:15377"/>
        <dbReference type="ChEBI" id="CHEBI:16708"/>
        <dbReference type="ChEBI" id="CHEBI:17319"/>
        <dbReference type="ChEBI" id="CHEBI:149540"/>
        <dbReference type="EC" id="3.2.2.9"/>
    </reaction>
    <physiologicalReaction direction="left-to-right" evidence="1">
        <dbReference type="Rhea" id="RHEA:29860"/>
    </physiologicalReaction>
</comment>
<comment type="pathway">
    <text evidence="1">Amino-acid biosynthesis; L-methionine biosynthesis via salvage pathway; S-methyl-5-thio-alpha-D-ribose 1-phosphate from S-methyl-5'-thioadenosine (hydrolase route): step 1/2.</text>
</comment>
<comment type="similarity">
    <text evidence="1">Belongs to the PNP/UDP phosphorylase family. MtnN subfamily.</text>
</comment>
<reference key="1">
    <citation type="submission" date="2008-08" db="EMBL/GenBank/DDBJ databases">
        <title>Complete sequence of Vibrio fischeri strain MJ11.</title>
        <authorList>
            <person name="Mandel M.J."/>
            <person name="Stabb E.V."/>
            <person name="Ruby E.G."/>
            <person name="Ferriera S."/>
            <person name="Johnson J."/>
            <person name="Kravitz S."/>
            <person name="Beeson K."/>
            <person name="Sutton G."/>
            <person name="Rogers Y.-H."/>
            <person name="Friedman R."/>
            <person name="Frazier M."/>
            <person name="Venter J.C."/>
        </authorList>
    </citation>
    <scope>NUCLEOTIDE SEQUENCE [LARGE SCALE GENOMIC DNA]</scope>
    <source>
        <strain>MJ11</strain>
    </source>
</reference>
<dbReference type="EC" id="3.2.2.9" evidence="1"/>
<dbReference type="EMBL" id="CP001139">
    <property type="protein sequence ID" value="ACH67009.1"/>
    <property type="molecule type" value="Genomic_DNA"/>
</dbReference>
<dbReference type="RefSeq" id="WP_011262577.1">
    <property type="nucleotide sequence ID" value="NC_011184.1"/>
</dbReference>
<dbReference type="SMR" id="B5FAL1"/>
<dbReference type="GeneID" id="54164838"/>
<dbReference type="KEGG" id="vfm:VFMJ11_2236"/>
<dbReference type="HOGENOM" id="CLU_031248_2_2_6"/>
<dbReference type="UniPathway" id="UPA00904">
    <property type="reaction ID" value="UER00871"/>
</dbReference>
<dbReference type="Proteomes" id="UP000001857">
    <property type="component" value="Chromosome I"/>
</dbReference>
<dbReference type="GO" id="GO:0005829">
    <property type="term" value="C:cytosol"/>
    <property type="evidence" value="ECO:0007669"/>
    <property type="project" value="TreeGrafter"/>
</dbReference>
<dbReference type="GO" id="GO:0008782">
    <property type="term" value="F:adenosylhomocysteine nucleosidase activity"/>
    <property type="evidence" value="ECO:0007669"/>
    <property type="project" value="UniProtKB-UniRule"/>
</dbReference>
<dbReference type="GO" id="GO:0008930">
    <property type="term" value="F:methylthioadenosine nucleosidase activity"/>
    <property type="evidence" value="ECO:0007669"/>
    <property type="project" value="UniProtKB-UniRule"/>
</dbReference>
<dbReference type="GO" id="GO:0019509">
    <property type="term" value="P:L-methionine salvage from methylthioadenosine"/>
    <property type="evidence" value="ECO:0007669"/>
    <property type="project" value="UniProtKB-UniRule"/>
</dbReference>
<dbReference type="GO" id="GO:0019284">
    <property type="term" value="P:L-methionine salvage from S-adenosylmethionine"/>
    <property type="evidence" value="ECO:0007669"/>
    <property type="project" value="TreeGrafter"/>
</dbReference>
<dbReference type="GO" id="GO:0009164">
    <property type="term" value="P:nucleoside catabolic process"/>
    <property type="evidence" value="ECO:0007669"/>
    <property type="project" value="InterPro"/>
</dbReference>
<dbReference type="CDD" id="cd09008">
    <property type="entry name" value="MTAN"/>
    <property type="match status" value="1"/>
</dbReference>
<dbReference type="FunFam" id="3.40.50.1580:FF:000001">
    <property type="entry name" value="MTA/SAH nucleosidase family protein"/>
    <property type="match status" value="1"/>
</dbReference>
<dbReference type="Gene3D" id="3.40.50.1580">
    <property type="entry name" value="Nucleoside phosphorylase domain"/>
    <property type="match status" value="1"/>
</dbReference>
<dbReference type="HAMAP" id="MF_01684">
    <property type="entry name" value="Salvage_MtnN"/>
    <property type="match status" value="1"/>
</dbReference>
<dbReference type="InterPro" id="IPR010049">
    <property type="entry name" value="MTA_SAH_Nsdase"/>
</dbReference>
<dbReference type="InterPro" id="IPR000845">
    <property type="entry name" value="Nucleoside_phosphorylase_d"/>
</dbReference>
<dbReference type="InterPro" id="IPR035994">
    <property type="entry name" value="Nucleoside_phosphorylase_sf"/>
</dbReference>
<dbReference type="NCBIfam" id="TIGR01704">
    <property type="entry name" value="MTA_SAH-Nsdase"/>
    <property type="match status" value="1"/>
</dbReference>
<dbReference type="NCBIfam" id="NF004079">
    <property type="entry name" value="PRK05584.1"/>
    <property type="match status" value="1"/>
</dbReference>
<dbReference type="PANTHER" id="PTHR46832">
    <property type="entry name" value="5'-METHYLTHIOADENOSINE/S-ADENOSYLHOMOCYSTEINE NUCLEOSIDASE"/>
    <property type="match status" value="1"/>
</dbReference>
<dbReference type="PANTHER" id="PTHR46832:SF1">
    <property type="entry name" value="5'-METHYLTHIOADENOSINE_S-ADENOSYLHOMOCYSTEINE NUCLEOSIDASE"/>
    <property type="match status" value="1"/>
</dbReference>
<dbReference type="Pfam" id="PF01048">
    <property type="entry name" value="PNP_UDP_1"/>
    <property type="match status" value="1"/>
</dbReference>
<dbReference type="SUPFAM" id="SSF53167">
    <property type="entry name" value="Purine and uridine phosphorylases"/>
    <property type="match status" value="1"/>
</dbReference>
<accession>B5FAL1</accession>
<sequence>MKIGIIGAMEQEVAILKDKIEGLSTVTKAGCTFYTGTLNGADVVLLQSGIGKVAAAVGTTLLIAEHNVDVVLNTGSAGGFDSSLNLGDVVISTEVRHHDADVTAFGYEMGQMAQQPAAFIADEKLITTAEQALTEMSDKHAVRGLICTGDVFVCTPERQEFIRTHFPSVIAVEMEASAIAQTCHQFNTPFVVVRAISDVADKESPMSFDEFLPLAAQSSSEMVLNMVTLLK</sequence>
<name>MTNN_ALIFM</name>
<proteinExistence type="inferred from homology"/>
<keyword id="KW-0028">Amino-acid biosynthesis</keyword>
<keyword id="KW-0378">Hydrolase</keyword>
<keyword id="KW-0486">Methionine biosynthesis</keyword>
<feature type="chain" id="PRO_0000359385" description="5'-methylthioadenosine/S-adenosylhomocysteine nucleosidase">
    <location>
        <begin position="1"/>
        <end position="231"/>
    </location>
</feature>
<feature type="active site" description="Proton acceptor" evidence="1">
    <location>
        <position position="12"/>
    </location>
</feature>
<feature type="active site" description="Proton donor" evidence="1">
    <location>
        <position position="198"/>
    </location>
</feature>
<feature type="binding site" evidence="1">
    <location>
        <position position="78"/>
    </location>
    <ligand>
        <name>substrate</name>
    </ligand>
</feature>
<feature type="binding site" evidence="1">
    <location>
        <position position="153"/>
    </location>
    <ligand>
        <name>substrate</name>
    </ligand>
</feature>
<feature type="binding site" evidence="1">
    <location>
        <begin position="174"/>
        <end position="175"/>
    </location>
    <ligand>
        <name>substrate</name>
    </ligand>
</feature>
<protein>
    <recommendedName>
        <fullName evidence="1">5'-methylthioadenosine/S-adenosylhomocysteine nucleosidase</fullName>
        <shortName evidence="1">MTA/SAH nucleosidase</shortName>
        <shortName evidence="1">MTAN</shortName>
        <ecNumber evidence="1">3.2.2.9</ecNumber>
    </recommendedName>
    <alternativeName>
        <fullName evidence="1">5'-deoxyadenosine nucleosidase</fullName>
        <shortName evidence="1">DOA nucleosidase</shortName>
        <shortName evidence="1">dAdo nucleosidase</shortName>
    </alternativeName>
    <alternativeName>
        <fullName evidence="1">5'-methylthioadenosine nucleosidase</fullName>
        <shortName evidence="1">MTA nucleosidase</shortName>
    </alternativeName>
    <alternativeName>
        <fullName evidence="1">S-adenosylhomocysteine nucleosidase</fullName>
        <shortName evidence="1">AdoHcy nucleosidase</shortName>
        <shortName evidence="1">SAH nucleosidase</shortName>
        <shortName evidence="1">SRH nucleosidase</shortName>
    </alternativeName>
</protein>
<organism>
    <name type="scientific">Aliivibrio fischeri (strain MJ11)</name>
    <name type="common">Vibrio fischeri</name>
    <dbReference type="NCBI Taxonomy" id="388396"/>
    <lineage>
        <taxon>Bacteria</taxon>
        <taxon>Pseudomonadati</taxon>
        <taxon>Pseudomonadota</taxon>
        <taxon>Gammaproteobacteria</taxon>
        <taxon>Vibrionales</taxon>
        <taxon>Vibrionaceae</taxon>
        <taxon>Aliivibrio</taxon>
    </lineage>
</organism>
<gene>
    <name evidence="1" type="primary">mtnN</name>
    <name type="ordered locus">VFMJ11_2236</name>
</gene>